<reference key="1">
    <citation type="journal article" date="2001" name="Nature">
        <title>Complete genome sequence of a multiple drug resistant Salmonella enterica serovar Typhi CT18.</title>
        <authorList>
            <person name="Parkhill J."/>
            <person name="Dougan G."/>
            <person name="James K.D."/>
            <person name="Thomson N.R."/>
            <person name="Pickard D."/>
            <person name="Wain J."/>
            <person name="Churcher C.M."/>
            <person name="Mungall K.L."/>
            <person name="Bentley S.D."/>
            <person name="Holden M.T.G."/>
            <person name="Sebaihia M."/>
            <person name="Baker S."/>
            <person name="Basham D."/>
            <person name="Brooks K."/>
            <person name="Chillingworth T."/>
            <person name="Connerton P."/>
            <person name="Cronin A."/>
            <person name="Davis P."/>
            <person name="Davies R.M."/>
            <person name="Dowd L."/>
            <person name="White N."/>
            <person name="Farrar J."/>
            <person name="Feltwell T."/>
            <person name="Hamlin N."/>
            <person name="Haque A."/>
            <person name="Hien T.T."/>
            <person name="Holroyd S."/>
            <person name="Jagels K."/>
            <person name="Krogh A."/>
            <person name="Larsen T.S."/>
            <person name="Leather S."/>
            <person name="Moule S."/>
            <person name="O'Gaora P."/>
            <person name="Parry C."/>
            <person name="Quail M.A."/>
            <person name="Rutherford K.M."/>
            <person name="Simmonds M."/>
            <person name="Skelton J."/>
            <person name="Stevens K."/>
            <person name="Whitehead S."/>
            <person name="Barrell B.G."/>
        </authorList>
    </citation>
    <scope>NUCLEOTIDE SEQUENCE [LARGE SCALE GENOMIC DNA]</scope>
    <source>
        <strain>CT18</strain>
    </source>
</reference>
<reference key="2">
    <citation type="journal article" date="2003" name="J. Bacteriol.">
        <title>Comparative genomics of Salmonella enterica serovar Typhi strains Ty2 and CT18.</title>
        <authorList>
            <person name="Deng W."/>
            <person name="Liou S.-R."/>
            <person name="Plunkett G. III"/>
            <person name="Mayhew G.F."/>
            <person name="Rose D.J."/>
            <person name="Burland V."/>
            <person name="Kodoyianni V."/>
            <person name="Schwartz D.C."/>
            <person name="Blattner F.R."/>
        </authorList>
    </citation>
    <scope>NUCLEOTIDE SEQUENCE [LARGE SCALE GENOMIC DNA]</scope>
    <source>
        <strain>ATCC 700931 / Ty2</strain>
    </source>
</reference>
<organism>
    <name type="scientific">Salmonella typhi</name>
    <dbReference type="NCBI Taxonomy" id="90370"/>
    <lineage>
        <taxon>Bacteria</taxon>
        <taxon>Pseudomonadati</taxon>
        <taxon>Pseudomonadota</taxon>
        <taxon>Gammaproteobacteria</taxon>
        <taxon>Enterobacterales</taxon>
        <taxon>Enterobacteriaceae</taxon>
        <taxon>Salmonella</taxon>
    </lineage>
</organism>
<evidence type="ECO:0000255" key="1">
    <source>
        <dbReference type="HAMAP-Rule" id="MF_01162"/>
    </source>
</evidence>
<name>AAS_SALTI</name>
<sequence length="719" mass="80477">MLFGFFRNLFRVLYRVRVTGDVRALQGNRVLIAPNHVSFIDGMLLALFLPVRPVFAVYTSISQQWYMRWLTPLIDFVPLDPTKPMSIKHLVRLVEQGRPVVIFPEGRISVTGSLMKIYDGAGFVAAKSGATVIPLRIDGAELTPFSRLKGLVKRRLFPRIQLHILPPTQIPMPEAPRARDRRKIAGEMLHQIMMEARMAVRPRETLYESLLAAQYRYGAGKNCIEDINFTPDTYRKLLTKTLFVGRILEKYSVEGEKIGLMLPNAAISAAVIFGAVSRRRIPAMMNYTAGVKGLTSAITAAEIKTIFTSRQFLDKGKLWHLPEQLTQVRWVYLEDLKADVTPADKLWIFAHLLAPRLAQVKQQPEDAAIILFTSGSEGHPKGVVHSHKSILANVEQIKTIADFTANDRFMSALPLFHSFGLTVGLFTPLLTGAEVFLYPSPLHYRIVPELVYDRNCTVLFGTSTFLGNYARFANPYDFYRLRYVVAGAEKLQESTKQLWQDKFGLRILEGYGVTECAPVVSINVPMAAKPGTVGRILPGMDARLLAVPGIENGGRLQLKGPNIMNGYLRVEKPGVLEVPSAENARGETERGWYDTGDIVRFDENGFVQIQGRAKRFAKIAGEMVSLEMVEQLALGVSAEKMHATAIKSDASKGEALVLFTTDSELTREKLQHYAREHGIPELAVPRDIRYLKQLPLLGSGKPDFVTLKSWVDAPEQHHE</sequence>
<feature type="chain" id="PRO_0000193052" description="Bifunctional protein Aas">
    <location>
        <begin position="1"/>
        <end position="719"/>
    </location>
</feature>
<feature type="transmembrane region" description="Helical" evidence="1">
    <location>
        <begin position="258"/>
        <end position="277"/>
    </location>
</feature>
<feature type="transmembrane region" description="Helical" evidence="1">
    <location>
        <begin position="409"/>
        <end position="433"/>
    </location>
</feature>
<feature type="region of interest" description="Acyltransferase">
    <location>
        <begin position="15"/>
        <end position="138"/>
    </location>
</feature>
<feature type="region of interest" description="AMP-binding">
    <location>
        <begin position="233"/>
        <end position="646"/>
    </location>
</feature>
<feature type="active site" evidence="1">
    <location>
        <position position="36"/>
    </location>
</feature>
<comment type="function">
    <text evidence="1">Plays a role in lysophospholipid acylation. Transfers fatty acids to the 1-position via an enzyme-bound acyl-ACP intermediate in the presence of ATP and magnesium. Its physiological function is to regenerate phosphatidylethanolamine from 2-acyl-glycero-3-phosphoethanolamine (2-acyl-GPE) formed by transacylation reactions or degradation by phospholipase A1.</text>
</comment>
<comment type="catalytic activity">
    <reaction evidence="1">
        <text>a 2-acyl-sn-glycero-3-phosphoethanolamine + a fatty acyl-[ACP] = a 1,2-diacyl-sn-glycero-3-phosphoethanolamine + holo-[ACP]</text>
        <dbReference type="Rhea" id="RHEA:10304"/>
        <dbReference type="Rhea" id="RHEA-COMP:9685"/>
        <dbReference type="Rhea" id="RHEA-COMP:14125"/>
        <dbReference type="ChEBI" id="CHEBI:64479"/>
        <dbReference type="ChEBI" id="CHEBI:64612"/>
        <dbReference type="ChEBI" id="CHEBI:65213"/>
        <dbReference type="ChEBI" id="CHEBI:138651"/>
        <dbReference type="EC" id="2.3.1.40"/>
    </reaction>
</comment>
<comment type="catalytic activity">
    <reaction evidence="1">
        <text>a long-chain fatty acid + holo-[ACP] + ATP = a long-chain fatty acyl-[ACP] + AMP + diphosphate</text>
        <dbReference type="Rhea" id="RHEA:45588"/>
        <dbReference type="Rhea" id="RHEA-COMP:9685"/>
        <dbReference type="Rhea" id="RHEA-COMP:12682"/>
        <dbReference type="ChEBI" id="CHEBI:30616"/>
        <dbReference type="ChEBI" id="CHEBI:33019"/>
        <dbReference type="ChEBI" id="CHEBI:57560"/>
        <dbReference type="ChEBI" id="CHEBI:64479"/>
        <dbReference type="ChEBI" id="CHEBI:133243"/>
        <dbReference type="ChEBI" id="CHEBI:456215"/>
        <dbReference type="EC" id="6.2.1.20"/>
    </reaction>
</comment>
<comment type="subcellular location">
    <subcellularLocation>
        <location evidence="1">Cell inner membrane</location>
        <topology evidence="1">Multi-pass membrane protein</topology>
    </subcellularLocation>
</comment>
<comment type="similarity">
    <text evidence="1">In the N-terminal section; belongs to the 2-acyl-GPE acetyltransferase family.</text>
</comment>
<comment type="similarity">
    <text evidence="1">In the C-terminal section; belongs to the ATP-dependent AMP-binding enzyme family.</text>
</comment>
<protein>
    <recommendedName>
        <fullName evidence="1">Bifunctional protein Aas</fullName>
    </recommendedName>
    <domain>
        <recommendedName>
            <fullName evidence="1">2-acylglycerophosphoethanolamine acyltransferase</fullName>
            <ecNumber evidence="1">2.3.1.40</ecNumber>
        </recommendedName>
        <alternativeName>
            <fullName evidence="1">2-acyl-GPE acyltransferase</fullName>
        </alternativeName>
        <alternativeName>
            <fullName evidence="1">Acyl-[acyl-carrier-protein]--phospholipid O-acyltransferase</fullName>
        </alternativeName>
    </domain>
    <domain>
        <recommendedName>
            <fullName evidence="1">Acyl-[acyl-carrier-protein] synthetase</fullName>
            <ecNumber evidence="1">6.2.1.20</ecNumber>
        </recommendedName>
        <alternativeName>
            <fullName evidence="1">Acyl-ACP synthetase</fullName>
        </alternativeName>
        <alternativeName>
            <fullName evidence="1">Long-chain-fatty-acid--[acyl-carrier-protein] ligase</fullName>
        </alternativeName>
    </domain>
</protein>
<accession>Q8Z406</accession>
<accession>Q7C7F5</accession>
<keyword id="KW-0012">Acyltransferase</keyword>
<keyword id="KW-0067">ATP-binding</keyword>
<keyword id="KW-0997">Cell inner membrane</keyword>
<keyword id="KW-1003">Cell membrane</keyword>
<keyword id="KW-0436">Ligase</keyword>
<keyword id="KW-0472">Membrane</keyword>
<keyword id="KW-0511">Multifunctional enzyme</keyword>
<keyword id="KW-0547">Nucleotide-binding</keyword>
<keyword id="KW-0808">Transferase</keyword>
<keyword id="KW-0812">Transmembrane</keyword>
<keyword id="KW-1133">Transmembrane helix</keyword>
<gene>
    <name evidence="1" type="primary">aas</name>
    <name type="ordered locus">STY3153</name>
    <name type="ordered locus">t2919</name>
</gene>
<proteinExistence type="inferred from homology"/>
<dbReference type="EC" id="2.3.1.40" evidence="1"/>
<dbReference type="EC" id="6.2.1.20" evidence="1"/>
<dbReference type="EMBL" id="AL513382">
    <property type="protein sequence ID" value="CAD02835.1"/>
    <property type="molecule type" value="Genomic_DNA"/>
</dbReference>
<dbReference type="EMBL" id="AE014613">
    <property type="protein sequence ID" value="AAO70473.1"/>
    <property type="molecule type" value="Genomic_DNA"/>
</dbReference>
<dbReference type="RefSeq" id="NP_457404.1">
    <property type="nucleotide sequence ID" value="NC_003198.1"/>
</dbReference>
<dbReference type="RefSeq" id="WP_000896085.1">
    <property type="nucleotide sequence ID" value="NZ_WSUR01000055.1"/>
</dbReference>
<dbReference type="SMR" id="Q8Z406"/>
<dbReference type="STRING" id="220341.gene:17587035"/>
<dbReference type="KEGG" id="stt:t2919"/>
<dbReference type="KEGG" id="sty:STY3153"/>
<dbReference type="PATRIC" id="fig|220341.7.peg.3207"/>
<dbReference type="eggNOG" id="COG0204">
    <property type="taxonomic scope" value="Bacteria"/>
</dbReference>
<dbReference type="eggNOG" id="COG0318">
    <property type="taxonomic scope" value="Bacteria"/>
</dbReference>
<dbReference type="HOGENOM" id="CLU_000022_59_8_6"/>
<dbReference type="OMA" id="ANWVYLE"/>
<dbReference type="OrthoDB" id="9803968at2"/>
<dbReference type="Proteomes" id="UP000000541">
    <property type="component" value="Chromosome"/>
</dbReference>
<dbReference type="Proteomes" id="UP000002670">
    <property type="component" value="Chromosome"/>
</dbReference>
<dbReference type="GO" id="GO:0005886">
    <property type="term" value="C:plasma membrane"/>
    <property type="evidence" value="ECO:0007669"/>
    <property type="project" value="UniProtKB-SubCell"/>
</dbReference>
<dbReference type="GO" id="GO:0008779">
    <property type="term" value="F:acyl-[acyl-carrier-protein]-phospholipid O-acyltransferase activity"/>
    <property type="evidence" value="ECO:0007669"/>
    <property type="project" value="UniProtKB-UniRule"/>
</dbReference>
<dbReference type="GO" id="GO:0005524">
    <property type="term" value="F:ATP binding"/>
    <property type="evidence" value="ECO:0007669"/>
    <property type="project" value="UniProtKB-KW"/>
</dbReference>
<dbReference type="GO" id="GO:0008922">
    <property type="term" value="F:long-chain fatty acid [acyl-carrier-protein] ligase activity"/>
    <property type="evidence" value="ECO:0007669"/>
    <property type="project" value="UniProtKB-UniRule"/>
</dbReference>
<dbReference type="GO" id="GO:0031956">
    <property type="term" value="F:medium-chain fatty acid-CoA ligase activity"/>
    <property type="evidence" value="ECO:0007669"/>
    <property type="project" value="TreeGrafter"/>
</dbReference>
<dbReference type="GO" id="GO:0006631">
    <property type="term" value="P:fatty acid metabolic process"/>
    <property type="evidence" value="ECO:0007669"/>
    <property type="project" value="InterPro"/>
</dbReference>
<dbReference type="GO" id="GO:0008654">
    <property type="term" value="P:phospholipid biosynthetic process"/>
    <property type="evidence" value="ECO:0007669"/>
    <property type="project" value="InterPro"/>
</dbReference>
<dbReference type="CDD" id="cd05909">
    <property type="entry name" value="AAS_C"/>
    <property type="match status" value="1"/>
</dbReference>
<dbReference type="CDD" id="cd07989">
    <property type="entry name" value="LPLAT_AGPAT-like"/>
    <property type="match status" value="1"/>
</dbReference>
<dbReference type="FunFam" id="3.30.300.30:FF:000009">
    <property type="entry name" value="Bifunctional protein Aas"/>
    <property type="match status" value="1"/>
</dbReference>
<dbReference type="FunFam" id="3.40.50.12780:FF:000009">
    <property type="entry name" value="Bifunctional protein Aas"/>
    <property type="match status" value="1"/>
</dbReference>
<dbReference type="Gene3D" id="3.30.300.30">
    <property type="match status" value="1"/>
</dbReference>
<dbReference type="Gene3D" id="3.40.50.12780">
    <property type="entry name" value="N-terminal domain of ligase-like"/>
    <property type="match status" value="1"/>
</dbReference>
<dbReference type="HAMAP" id="MF_01162">
    <property type="entry name" value="Aas"/>
    <property type="match status" value="1"/>
</dbReference>
<dbReference type="InterPro" id="IPR023775">
    <property type="entry name" value="Aas"/>
</dbReference>
<dbReference type="InterPro" id="IPR045851">
    <property type="entry name" value="AMP-bd_C_sf"/>
</dbReference>
<dbReference type="InterPro" id="IPR020845">
    <property type="entry name" value="AMP-binding_CS"/>
</dbReference>
<dbReference type="InterPro" id="IPR000873">
    <property type="entry name" value="AMP-dep_synth/lig_dom"/>
</dbReference>
<dbReference type="InterPro" id="IPR042099">
    <property type="entry name" value="ANL_N_sf"/>
</dbReference>
<dbReference type="InterPro" id="IPR002123">
    <property type="entry name" value="Plipid/glycerol_acylTrfase"/>
</dbReference>
<dbReference type="NCBIfam" id="NF005959">
    <property type="entry name" value="PRK08043.1"/>
    <property type="match status" value="1"/>
</dbReference>
<dbReference type="PANTHER" id="PTHR43201">
    <property type="entry name" value="ACYL-COA SYNTHETASE"/>
    <property type="match status" value="1"/>
</dbReference>
<dbReference type="PANTHER" id="PTHR43201:SF8">
    <property type="entry name" value="ACYL-COA SYNTHETASE FAMILY MEMBER 3"/>
    <property type="match status" value="1"/>
</dbReference>
<dbReference type="Pfam" id="PF01553">
    <property type="entry name" value="Acyltransferase"/>
    <property type="match status" value="1"/>
</dbReference>
<dbReference type="Pfam" id="PF00501">
    <property type="entry name" value="AMP-binding"/>
    <property type="match status" value="1"/>
</dbReference>
<dbReference type="SMART" id="SM00563">
    <property type="entry name" value="PlsC"/>
    <property type="match status" value="1"/>
</dbReference>
<dbReference type="SUPFAM" id="SSF56801">
    <property type="entry name" value="Acetyl-CoA synthetase-like"/>
    <property type="match status" value="1"/>
</dbReference>
<dbReference type="SUPFAM" id="SSF69593">
    <property type="entry name" value="Glycerol-3-phosphate (1)-acyltransferase"/>
    <property type="match status" value="1"/>
</dbReference>
<dbReference type="PROSITE" id="PS00455">
    <property type="entry name" value="AMP_BINDING"/>
    <property type="match status" value="1"/>
</dbReference>